<keyword id="KW-0238">DNA-binding</keyword>
<keyword id="KW-1185">Reference proteome</keyword>
<keyword id="KW-0804">Transcription</keyword>
<keyword id="KW-0805">Transcription regulation</keyword>
<evidence type="ECO:0000250" key="1"/>
<evidence type="ECO:0000305" key="2"/>
<proteinExistence type="evidence at protein level"/>
<protein>
    <recommendedName>
        <fullName>HTH-type transcriptional regulator YidZ</fullName>
    </recommendedName>
</protein>
<dbReference type="EMBL" id="L10328">
    <property type="protein sequence ID" value="AAA62062.1"/>
    <property type="molecule type" value="Genomic_DNA"/>
</dbReference>
<dbReference type="EMBL" id="U00096">
    <property type="protein sequence ID" value="AAC76734.1"/>
    <property type="molecule type" value="Genomic_DNA"/>
</dbReference>
<dbReference type="EMBL" id="AP009048">
    <property type="protein sequence ID" value="BAE77579.1"/>
    <property type="molecule type" value="Genomic_DNA"/>
</dbReference>
<dbReference type="PIR" id="H65173">
    <property type="entry name" value="H65173"/>
</dbReference>
<dbReference type="RefSeq" id="NP_418167.1">
    <property type="nucleotide sequence ID" value="NC_000913.3"/>
</dbReference>
<dbReference type="RefSeq" id="WP_001311238.1">
    <property type="nucleotide sequence ID" value="NZ_SSZK01000035.1"/>
</dbReference>
<dbReference type="SMR" id="P31463"/>
<dbReference type="BioGRID" id="4262597">
    <property type="interactions" value="58"/>
</dbReference>
<dbReference type="DIP" id="DIP-12458N"/>
<dbReference type="FunCoup" id="P31463">
    <property type="interactions" value="132"/>
</dbReference>
<dbReference type="IntAct" id="P31463">
    <property type="interactions" value="2"/>
</dbReference>
<dbReference type="STRING" id="511145.b3711"/>
<dbReference type="PaxDb" id="511145-b3711"/>
<dbReference type="DNASU" id="948227"/>
<dbReference type="EnsemblBacteria" id="AAC76734">
    <property type="protein sequence ID" value="AAC76734"/>
    <property type="gene ID" value="b3711"/>
</dbReference>
<dbReference type="GeneID" id="948227"/>
<dbReference type="KEGG" id="ecj:JW3689"/>
<dbReference type="KEGG" id="eco:b3711"/>
<dbReference type="KEGG" id="ecoc:C3026_20120"/>
<dbReference type="PATRIC" id="fig|1411691.4.peg.2990"/>
<dbReference type="EchoBASE" id="EB1672"/>
<dbReference type="eggNOG" id="COG0583">
    <property type="taxonomic scope" value="Bacteria"/>
</dbReference>
<dbReference type="HOGENOM" id="CLU_039613_39_2_6"/>
<dbReference type="InParanoid" id="P31463"/>
<dbReference type="OMA" id="SRMRTAW"/>
<dbReference type="OrthoDB" id="8893795at2"/>
<dbReference type="PhylomeDB" id="P31463"/>
<dbReference type="BioCyc" id="EcoCyc:EG11721-MONOMER"/>
<dbReference type="PRO" id="PR:P31463"/>
<dbReference type="Proteomes" id="UP000000625">
    <property type="component" value="Chromosome"/>
</dbReference>
<dbReference type="GO" id="GO:0003677">
    <property type="term" value="F:DNA binding"/>
    <property type="evidence" value="ECO:0007669"/>
    <property type="project" value="UniProtKB-KW"/>
</dbReference>
<dbReference type="GO" id="GO:0003700">
    <property type="term" value="F:DNA-binding transcription factor activity"/>
    <property type="evidence" value="ECO:0007669"/>
    <property type="project" value="UniProtKB-UniRule"/>
</dbReference>
<dbReference type="GO" id="GO:0006351">
    <property type="term" value="P:DNA-templated transcription"/>
    <property type="evidence" value="ECO:0000315"/>
    <property type="project" value="EcoCyc"/>
</dbReference>
<dbReference type="GO" id="GO:0006355">
    <property type="term" value="P:regulation of DNA-templated transcription"/>
    <property type="evidence" value="ECO:0000318"/>
    <property type="project" value="GO_Central"/>
</dbReference>
<dbReference type="CDD" id="cd08417">
    <property type="entry name" value="PBP2_Nitroaromatics_like"/>
    <property type="match status" value="1"/>
</dbReference>
<dbReference type="FunFam" id="3.40.190.10:FF:000092">
    <property type="entry name" value="HTH-type transcriptional regulator YidZ"/>
    <property type="match status" value="1"/>
</dbReference>
<dbReference type="Gene3D" id="3.40.190.10">
    <property type="entry name" value="Periplasmic binding protein-like II"/>
    <property type="match status" value="2"/>
</dbReference>
<dbReference type="Gene3D" id="1.10.10.10">
    <property type="entry name" value="Winged helix-like DNA-binding domain superfamily/Winged helix DNA-binding domain"/>
    <property type="match status" value="1"/>
</dbReference>
<dbReference type="HAMAP" id="MF_01607">
    <property type="entry name" value="HTH_type_YidZ"/>
    <property type="match status" value="1"/>
</dbReference>
<dbReference type="InterPro" id="IPR050389">
    <property type="entry name" value="LysR-type_TF"/>
</dbReference>
<dbReference type="InterPro" id="IPR005119">
    <property type="entry name" value="LysR_subst-bd"/>
</dbReference>
<dbReference type="InterPro" id="IPR000847">
    <property type="entry name" value="Tscrpt_reg_HTH_LysR"/>
</dbReference>
<dbReference type="InterPro" id="IPR023746">
    <property type="entry name" value="Tscrpt_reg_YidZ"/>
</dbReference>
<dbReference type="InterPro" id="IPR036388">
    <property type="entry name" value="WH-like_DNA-bd_sf"/>
</dbReference>
<dbReference type="InterPro" id="IPR036390">
    <property type="entry name" value="WH_DNA-bd_sf"/>
</dbReference>
<dbReference type="InterPro" id="IPR037402">
    <property type="entry name" value="YidZ_PBP2"/>
</dbReference>
<dbReference type="NCBIfam" id="NF007581">
    <property type="entry name" value="PRK10216.1"/>
    <property type="match status" value="1"/>
</dbReference>
<dbReference type="PANTHER" id="PTHR30118">
    <property type="entry name" value="HTH-TYPE TRANSCRIPTIONAL REGULATOR LEUO-RELATED"/>
    <property type="match status" value="1"/>
</dbReference>
<dbReference type="PANTHER" id="PTHR30118:SF11">
    <property type="entry name" value="HTH-TYPE TRANSCRIPTIONAL REGULATOR YIDZ"/>
    <property type="match status" value="1"/>
</dbReference>
<dbReference type="Pfam" id="PF00126">
    <property type="entry name" value="HTH_1"/>
    <property type="match status" value="1"/>
</dbReference>
<dbReference type="Pfam" id="PF03466">
    <property type="entry name" value="LysR_substrate"/>
    <property type="match status" value="1"/>
</dbReference>
<dbReference type="SUPFAM" id="SSF53850">
    <property type="entry name" value="Periplasmic binding protein-like II"/>
    <property type="match status" value="1"/>
</dbReference>
<dbReference type="SUPFAM" id="SSF46785">
    <property type="entry name" value="Winged helix' DNA-binding domain"/>
    <property type="match status" value="1"/>
</dbReference>
<dbReference type="PROSITE" id="PS50931">
    <property type="entry name" value="HTH_LYSR"/>
    <property type="match status" value="1"/>
</dbReference>
<name>YIDZ_ECOLI</name>
<accession>P31463</accession>
<accession>Q2M827</accession>
<feature type="chain" id="PRO_0000105801" description="HTH-type transcriptional regulator YidZ">
    <location>
        <begin position="1"/>
        <end position="319"/>
    </location>
</feature>
<feature type="domain" description="HTH lysR-type">
    <location>
        <begin position="8"/>
        <end position="65"/>
    </location>
</feature>
<feature type="DNA-binding region" description="H-T-H motif" evidence="1">
    <location>
        <begin position="25"/>
        <end position="44"/>
    </location>
</feature>
<sequence>MKKSITTLDLNLLLCLQLLMQERSVTKAAKRINVTPSAVSKSLAKLRAWFDDPLFVNSPLGLSPTPLMVSMEQNLAEWMQMSNLLLDKPHHQTPRGLKFELAAESPLMMIMLNALSKQIYQRYPQATIKLRNWDYDSLDAITRGEVDIGFSGRESHPRSRELLSSLPLAIDYEVLFSDVPCVWLRKDHPALHQTWNLDTFLRYPHISICWEQSDTWALDNVLQELGRERTIAMSLPEFEQSLFMAAQPDNLLLATAPRYCQYYNQLHQLPLVALPLPFDESQQKKLEVPFTLLWHKRNSHNPKIVWLRETIKNLYASMA</sequence>
<organism>
    <name type="scientific">Escherichia coli (strain K12)</name>
    <dbReference type="NCBI Taxonomy" id="83333"/>
    <lineage>
        <taxon>Bacteria</taxon>
        <taxon>Pseudomonadati</taxon>
        <taxon>Pseudomonadota</taxon>
        <taxon>Gammaproteobacteria</taxon>
        <taxon>Enterobacterales</taxon>
        <taxon>Enterobacteriaceae</taxon>
        <taxon>Escherichia</taxon>
    </lineage>
</organism>
<reference key="1">
    <citation type="journal article" date="1993" name="Genomics">
        <title>DNA sequence and analysis of 136 kilobases of the Escherichia coli genome: organizational symmetry around the origin of replication.</title>
        <authorList>
            <person name="Burland V.D."/>
            <person name="Plunkett G. III"/>
            <person name="Daniels D.L."/>
            <person name="Blattner F.R."/>
        </authorList>
    </citation>
    <scope>NUCLEOTIDE SEQUENCE [LARGE SCALE GENOMIC DNA]</scope>
    <source>
        <strain>K12 / MG1655 / ATCC 47076</strain>
    </source>
</reference>
<reference key="2">
    <citation type="journal article" date="1997" name="Science">
        <title>The complete genome sequence of Escherichia coli K-12.</title>
        <authorList>
            <person name="Blattner F.R."/>
            <person name="Plunkett G. III"/>
            <person name="Bloch C.A."/>
            <person name="Perna N.T."/>
            <person name="Burland V."/>
            <person name="Riley M."/>
            <person name="Collado-Vides J."/>
            <person name="Glasner J.D."/>
            <person name="Rode C.K."/>
            <person name="Mayhew G.F."/>
            <person name="Gregor J."/>
            <person name="Davis N.W."/>
            <person name="Kirkpatrick H.A."/>
            <person name="Goeden M.A."/>
            <person name="Rose D.J."/>
            <person name="Mau B."/>
            <person name="Shao Y."/>
        </authorList>
    </citation>
    <scope>NUCLEOTIDE SEQUENCE [LARGE SCALE GENOMIC DNA]</scope>
    <source>
        <strain>K12 / MG1655 / ATCC 47076</strain>
    </source>
</reference>
<reference key="3">
    <citation type="journal article" date="2006" name="Mol. Syst. Biol.">
        <title>Highly accurate genome sequences of Escherichia coli K-12 strains MG1655 and W3110.</title>
        <authorList>
            <person name="Hayashi K."/>
            <person name="Morooka N."/>
            <person name="Yamamoto Y."/>
            <person name="Fujita K."/>
            <person name="Isono K."/>
            <person name="Choi S."/>
            <person name="Ohtsubo E."/>
            <person name="Baba T."/>
            <person name="Wanner B.L."/>
            <person name="Mori H."/>
            <person name="Horiuchi T."/>
        </authorList>
    </citation>
    <scope>NUCLEOTIDE SEQUENCE [LARGE SCALE GENOMIC DNA]</scope>
    <source>
        <strain>K12 / W3110 / ATCC 27325 / DSM 5911</strain>
    </source>
</reference>
<reference key="4">
    <citation type="journal article" date="2005" name="J. Biol. Chem.">
        <title>New genes implicated in the protection of anaerobically grown Escherichia coli against nitric oxide.</title>
        <authorList>
            <person name="Justino M.C."/>
            <person name="Vicente J.B."/>
            <person name="Teixeira M."/>
            <person name="Saraiva L.M."/>
        </authorList>
    </citation>
    <scope>CHARACTERIZATION</scope>
</reference>
<comment type="function">
    <text>Involved in anaerobic NO protection.</text>
</comment>
<comment type="similarity">
    <text evidence="2">Belongs to the LysR transcriptional regulatory family.</text>
</comment>
<gene>
    <name type="primary">yidZ</name>
    <name type="ordered locus">b3711</name>
    <name type="ordered locus">JW3689</name>
</gene>